<dbReference type="EC" id="2.8.1.13" evidence="1"/>
<dbReference type="EMBL" id="CP000673">
    <property type="protein sequence ID" value="EDK33130.1"/>
    <property type="molecule type" value="Genomic_DNA"/>
</dbReference>
<dbReference type="RefSeq" id="WP_012101467.1">
    <property type="nucleotide sequence ID" value="NC_009706.1"/>
</dbReference>
<dbReference type="SMR" id="A5N749"/>
<dbReference type="STRING" id="431943.CKL_1088"/>
<dbReference type="KEGG" id="ckl:CKL_1088"/>
<dbReference type="eggNOG" id="COG0482">
    <property type="taxonomic scope" value="Bacteria"/>
</dbReference>
<dbReference type="HOGENOM" id="CLU_035188_0_0_9"/>
<dbReference type="Proteomes" id="UP000002411">
    <property type="component" value="Chromosome"/>
</dbReference>
<dbReference type="GO" id="GO:0005737">
    <property type="term" value="C:cytoplasm"/>
    <property type="evidence" value="ECO:0007669"/>
    <property type="project" value="UniProtKB-SubCell"/>
</dbReference>
<dbReference type="GO" id="GO:0005524">
    <property type="term" value="F:ATP binding"/>
    <property type="evidence" value="ECO:0007669"/>
    <property type="project" value="UniProtKB-KW"/>
</dbReference>
<dbReference type="GO" id="GO:0000049">
    <property type="term" value="F:tRNA binding"/>
    <property type="evidence" value="ECO:0007669"/>
    <property type="project" value="UniProtKB-KW"/>
</dbReference>
<dbReference type="GO" id="GO:0103016">
    <property type="term" value="F:tRNA-uridine 2-sulfurtransferase activity"/>
    <property type="evidence" value="ECO:0007669"/>
    <property type="project" value="UniProtKB-EC"/>
</dbReference>
<dbReference type="GO" id="GO:0002143">
    <property type="term" value="P:tRNA wobble position uridine thiolation"/>
    <property type="evidence" value="ECO:0007669"/>
    <property type="project" value="TreeGrafter"/>
</dbReference>
<dbReference type="CDD" id="cd01998">
    <property type="entry name" value="MnmA_TRMU-like"/>
    <property type="match status" value="1"/>
</dbReference>
<dbReference type="FunFam" id="2.30.30.280:FF:000001">
    <property type="entry name" value="tRNA-specific 2-thiouridylase MnmA"/>
    <property type="match status" value="1"/>
</dbReference>
<dbReference type="FunFam" id="2.40.30.10:FF:000023">
    <property type="entry name" value="tRNA-specific 2-thiouridylase MnmA"/>
    <property type="match status" value="1"/>
</dbReference>
<dbReference type="FunFam" id="3.40.50.620:FF:000115">
    <property type="entry name" value="tRNA-specific 2-thiouridylase MnmA"/>
    <property type="match status" value="1"/>
</dbReference>
<dbReference type="Gene3D" id="2.30.30.280">
    <property type="entry name" value="Adenine nucleotide alpha hydrolases-like domains"/>
    <property type="match status" value="1"/>
</dbReference>
<dbReference type="Gene3D" id="3.40.50.620">
    <property type="entry name" value="HUPs"/>
    <property type="match status" value="1"/>
</dbReference>
<dbReference type="Gene3D" id="2.40.30.10">
    <property type="entry name" value="Translation factors"/>
    <property type="match status" value="1"/>
</dbReference>
<dbReference type="HAMAP" id="MF_00144">
    <property type="entry name" value="tRNA_thiouridyl_MnmA"/>
    <property type="match status" value="1"/>
</dbReference>
<dbReference type="InterPro" id="IPR004506">
    <property type="entry name" value="MnmA-like"/>
</dbReference>
<dbReference type="InterPro" id="IPR046885">
    <property type="entry name" value="MnmA-like_C"/>
</dbReference>
<dbReference type="InterPro" id="IPR046884">
    <property type="entry name" value="MnmA-like_central"/>
</dbReference>
<dbReference type="InterPro" id="IPR023382">
    <property type="entry name" value="MnmA-like_central_sf"/>
</dbReference>
<dbReference type="InterPro" id="IPR014729">
    <property type="entry name" value="Rossmann-like_a/b/a_fold"/>
</dbReference>
<dbReference type="NCBIfam" id="NF001138">
    <property type="entry name" value="PRK00143.1"/>
    <property type="match status" value="1"/>
</dbReference>
<dbReference type="NCBIfam" id="TIGR00420">
    <property type="entry name" value="trmU"/>
    <property type="match status" value="1"/>
</dbReference>
<dbReference type="PANTHER" id="PTHR11933:SF5">
    <property type="entry name" value="MITOCHONDRIAL TRNA-SPECIFIC 2-THIOURIDYLASE 1"/>
    <property type="match status" value="1"/>
</dbReference>
<dbReference type="PANTHER" id="PTHR11933">
    <property type="entry name" value="TRNA 5-METHYLAMINOMETHYL-2-THIOURIDYLATE -METHYLTRANSFERASE"/>
    <property type="match status" value="1"/>
</dbReference>
<dbReference type="Pfam" id="PF03054">
    <property type="entry name" value="tRNA_Me_trans"/>
    <property type="match status" value="1"/>
</dbReference>
<dbReference type="Pfam" id="PF20258">
    <property type="entry name" value="tRNA_Me_trans_C"/>
    <property type="match status" value="1"/>
</dbReference>
<dbReference type="Pfam" id="PF20259">
    <property type="entry name" value="tRNA_Me_trans_M"/>
    <property type="match status" value="1"/>
</dbReference>
<dbReference type="SUPFAM" id="SSF52402">
    <property type="entry name" value="Adenine nucleotide alpha hydrolases-like"/>
    <property type="match status" value="1"/>
</dbReference>
<organism>
    <name type="scientific">Clostridium kluyveri (strain ATCC 8527 / DSM 555 / NBRC 12016 / NCIMB 10680 / K1)</name>
    <dbReference type="NCBI Taxonomy" id="431943"/>
    <lineage>
        <taxon>Bacteria</taxon>
        <taxon>Bacillati</taxon>
        <taxon>Bacillota</taxon>
        <taxon>Clostridia</taxon>
        <taxon>Eubacteriales</taxon>
        <taxon>Clostridiaceae</taxon>
        <taxon>Clostridium</taxon>
    </lineage>
</organism>
<evidence type="ECO:0000255" key="1">
    <source>
        <dbReference type="HAMAP-Rule" id="MF_00144"/>
    </source>
</evidence>
<protein>
    <recommendedName>
        <fullName evidence="1">tRNA-specific 2-thiouridylase MnmA</fullName>
        <ecNumber evidence="1">2.8.1.13</ecNumber>
    </recommendedName>
</protein>
<accession>A5N749</accession>
<reference key="1">
    <citation type="journal article" date="2008" name="Proc. Natl. Acad. Sci. U.S.A.">
        <title>The genome of Clostridium kluyveri, a strict anaerobe with unique metabolic features.</title>
        <authorList>
            <person name="Seedorf H."/>
            <person name="Fricke W.F."/>
            <person name="Veith B."/>
            <person name="Brueggemann H."/>
            <person name="Liesegang H."/>
            <person name="Strittmatter A."/>
            <person name="Miethke M."/>
            <person name="Buckel W."/>
            <person name="Hinderberger J."/>
            <person name="Li F."/>
            <person name="Hagemeier C."/>
            <person name="Thauer R.K."/>
            <person name="Gottschalk G."/>
        </authorList>
    </citation>
    <scope>NUCLEOTIDE SEQUENCE [LARGE SCALE GENOMIC DNA]</scope>
    <source>
        <strain>ATCC 8527 / DSM 555 / NBRC 12016 / NCIMB 10680 / K1</strain>
    </source>
</reference>
<comment type="function">
    <text evidence="1">Catalyzes the 2-thiolation of uridine at the wobble position (U34) of tRNA, leading to the formation of s(2)U34.</text>
</comment>
<comment type="catalytic activity">
    <reaction evidence="1">
        <text>S-sulfanyl-L-cysteinyl-[protein] + uridine(34) in tRNA + AH2 + ATP = 2-thiouridine(34) in tRNA + L-cysteinyl-[protein] + A + AMP + diphosphate + H(+)</text>
        <dbReference type="Rhea" id="RHEA:47032"/>
        <dbReference type="Rhea" id="RHEA-COMP:10131"/>
        <dbReference type="Rhea" id="RHEA-COMP:11726"/>
        <dbReference type="Rhea" id="RHEA-COMP:11727"/>
        <dbReference type="Rhea" id="RHEA-COMP:11728"/>
        <dbReference type="ChEBI" id="CHEBI:13193"/>
        <dbReference type="ChEBI" id="CHEBI:15378"/>
        <dbReference type="ChEBI" id="CHEBI:17499"/>
        <dbReference type="ChEBI" id="CHEBI:29950"/>
        <dbReference type="ChEBI" id="CHEBI:30616"/>
        <dbReference type="ChEBI" id="CHEBI:33019"/>
        <dbReference type="ChEBI" id="CHEBI:61963"/>
        <dbReference type="ChEBI" id="CHEBI:65315"/>
        <dbReference type="ChEBI" id="CHEBI:87170"/>
        <dbReference type="ChEBI" id="CHEBI:456215"/>
        <dbReference type="EC" id="2.8.1.13"/>
    </reaction>
</comment>
<comment type="subcellular location">
    <subcellularLocation>
        <location evidence="1">Cytoplasm</location>
    </subcellularLocation>
</comment>
<comment type="similarity">
    <text evidence="1">Belongs to the MnmA/TRMU family.</text>
</comment>
<sequence>MAKKVVVGMSGGVDSSVAAHLLKEQGYEVIGVTMQVWQEDDYYEDMESGCCSLSAVEDAKMVAYHLNIPHYVMNFKEAFKKNVIDYFIQEYMEGKTPNPCIACNKYIKFDELLKRAMDLGADYVATGHYATVEKINDRYTLRKSKDHNKDQTYALYNLTQFQLAHTLMPCGIYKKEEIREIAREIGLMVHSKRDSEEICFIPDNDHGAYIKRITKDKVKEGNFIDKEGNVLGKHKGIVYYTLGQRKGLGLSFGVPTYVIDIKPYTNEVVLGSEEDIFKTDLVAKDVNFLPFENLTSPMKVEAKIRYSSKPAEATISCLDEERIKVKFTDRQRAITKGQSVVFYKDNILIGGGIIDS</sequence>
<gene>
    <name evidence="1" type="primary">mnmA</name>
    <name type="ordered locus">CKL_1088</name>
</gene>
<feature type="chain" id="PRO_0000349596" description="tRNA-specific 2-thiouridylase MnmA">
    <location>
        <begin position="1"/>
        <end position="356"/>
    </location>
</feature>
<feature type="region of interest" description="Interaction with tRNA" evidence="1">
    <location>
        <begin position="149"/>
        <end position="151"/>
    </location>
</feature>
<feature type="region of interest" description="Interaction with tRNA" evidence="1">
    <location>
        <begin position="305"/>
        <end position="306"/>
    </location>
</feature>
<feature type="active site" description="Nucleophile" evidence="1">
    <location>
        <position position="103"/>
    </location>
</feature>
<feature type="active site" description="Cysteine persulfide intermediate" evidence="1">
    <location>
        <position position="199"/>
    </location>
</feature>
<feature type="binding site" evidence="1">
    <location>
        <begin position="8"/>
        <end position="15"/>
    </location>
    <ligand>
        <name>ATP</name>
        <dbReference type="ChEBI" id="CHEBI:30616"/>
    </ligand>
</feature>
<feature type="binding site" evidence="1">
    <location>
        <position position="34"/>
    </location>
    <ligand>
        <name>ATP</name>
        <dbReference type="ChEBI" id="CHEBI:30616"/>
    </ligand>
</feature>
<feature type="binding site" evidence="1">
    <location>
        <position position="127"/>
    </location>
    <ligand>
        <name>ATP</name>
        <dbReference type="ChEBI" id="CHEBI:30616"/>
    </ligand>
</feature>
<feature type="site" description="Interaction with tRNA" evidence="1">
    <location>
        <position position="128"/>
    </location>
</feature>
<feature type="site" description="Interaction with tRNA" evidence="1">
    <location>
        <position position="338"/>
    </location>
</feature>
<feature type="disulfide bond" description="Alternate" evidence="1">
    <location>
        <begin position="103"/>
        <end position="199"/>
    </location>
</feature>
<proteinExistence type="inferred from homology"/>
<keyword id="KW-0067">ATP-binding</keyword>
<keyword id="KW-0963">Cytoplasm</keyword>
<keyword id="KW-1015">Disulfide bond</keyword>
<keyword id="KW-0547">Nucleotide-binding</keyword>
<keyword id="KW-1185">Reference proteome</keyword>
<keyword id="KW-0694">RNA-binding</keyword>
<keyword id="KW-0808">Transferase</keyword>
<keyword id="KW-0819">tRNA processing</keyword>
<keyword id="KW-0820">tRNA-binding</keyword>
<name>MNMA_CLOK5</name>